<keyword id="KW-0067">ATP-binding</keyword>
<keyword id="KW-0143">Chaperone</keyword>
<keyword id="KW-0963">Cytoplasm</keyword>
<keyword id="KW-0413">Isomerase</keyword>
<keyword id="KW-0547">Nucleotide-binding</keyword>
<comment type="function">
    <text evidence="1">Together with its co-chaperonin GroES, plays an essential role in assisting protein folding. The GroEL-GroES system forms a nano-cage that allows encapsulation of the non-native substrate proteins and provides a physical environment optimized to promote and accelerate protein folding.</text>
</comment>
<comment type="catalytic activity">
    <reaction evidence="1">
        <text>ATP + H2O + a folded polypeptide = ADP + phosphate + an unfolded polypeptide.</text>
        <dbReference type="EC" id="5.6.1.7"/>
    </reaction>
</comment>
<comment type="subunit">
    <text evidence="1">Forms a cylinder of 14 subunits composed of two heptameric rings stacked back-to-back. Interacts with the co-chaperonin GroES.</text>
</comment>
<comment type="subcellular location">
    <subcellularLocation>
        <location evidence="1">Cytoplasm</location>
    </subcellularLocation>
</comment>
<comment type="similarity">
    <text evidence="1">Belongs to the chaperonin (HSP60) family.</text>
</comment>
<dbReference type="EC" id="5.6.1.7" evidence="1"/>
<dbReference type="EMBL" id="CP000460">
    <property type="protein sequence ID" value="ABK12983.1"/>
    <property type="molecule type" value="Genomic_DNA"/>
</dbReference>
<dbReference type="SMR" id="A0KCS0"/>
<dbReference type="KEGG" id="bch:Bcen2424_6251"/>
<dbReference type="HOGENOM" id="CLU_016503_3_0_4"/>
<dbReference type="GO" id="GO:0005737">
    <property type="term" value="C:cytoplasm"/>
    <property type="evidence" value="ECO:0007669"/>
    <property type="project" value="UniProtKB-SubCell"/>
</dbReference>
<dbReference type="GO" id="GO:0005524">
    <property type="term" value="F:ATP binding"/>
    <property type="evidence" value="ECO:0007669"/>
    <property type="project" value="UniProtKB-UniRule"/>
</dbReference>
<dbReference type="GO" id="GO:0140662">
    <property type="term" value="F:ATP-dependent protein folding chaperone"/>
    <property type="evidence" value="ECO:0007669"/>
    <property type="project" value="InterPro"/>
</dbReference>
<dbReference type="GO" id="GO:0016853">
    <property type="term" value="F:isomerase activity"/>
    <property type="evidence" value="ECO:0007669"/>
    <property type="project" value="UniProtKB-KW"/>
</dbReference>
<dbReference type="GO" id="GO:0051082">
    <property type="term" value="F:unfolded protein binding"/>
    <property type="evidence" value="ECO:0007669"/>
    <property type="project" value="UniProtKB-UniRule"/>
</dbReference>
<dbReference type="GO" id="GO:0042026">
    <property type="term" value="P:protein refolding"/>
    <property type="evidence" value="ECO:0007669"/>
    <property type="project" value="UniProtKB-UniRule"/>
</dbReference>
<dbReference type="CDD" id="cd03344">
    <property type="entry name" value="GroEL"/>
    <property type="match status" value="1"/>
</dbReference>
<dbReference type="FunFam" id="1.10.560.10:FF:000001">
    <property type="entry name" value="60 kDa chaperonin"/>
    <property type="match status" value="1"/>
</dbReference>
<dbReference type="FunFam" id="3.50.7.10:FF:000001">
    <property type="entry name" value="60 kDa chaperonin"/>
    <property type="match status" value="1"/>
</dbReference>
<dbReference type="Gene3D" id="3.50.7.10">
    <property type="entry name" value="GroEL"/>
    <property type="match status" value="1"/>
</dbReference>
<dbReference type="Gene3D" id="1.10.560.10">
    <property type="entry name" value="GroEL-like equatorial domain"/>
    <property type="match status" value="1"/>
</dbReference>
<dbReference type="Gene3D" id="3.30.260.10">
    <property type="entry name" value="TCP-1-like chaperonin intermediate domain"/>
    <property type="match status" value="1"/>
</dbReference>
<dbReference type="HAMAP" id="MF_00600">
    <property type="entry name" value="CH60"/>
    <property type="match status" value="1"/>
</dbReference>
<dbReference type="InterPro" id="IPR018370">
    <property type="entry name" value="Chaperonin_Cpn60_CS"/>
</dbReference>
<dbReference type="InterPro" id="IPR001844">
    <property type="entry name" value="Cpn60/GroEL"/>
</dbReference>
<dbReference type="InterPro" id="IPR002423">
    <property type="entry name" value="Cpn60/GroEL/TCP-1"/>
</dbReference>
<dbReference type="InterPro" id="IPR027409">
    <property type="entry name" value="GroEL-like_apical_dom_sf"/>
</dbReference>
<dbReference type="InterPro" id="IPR027413">
    <property type="entry name" value="GROEL-like_equatorial_sf"/>
</dbReference>
<dbReference type="InterPro" id="IPR027410">
    <property type="entry name" value="TCP-1-like_intermed_sf"/>
</dbReference>
<dbReference type="NCBIfam" id="TIGR02348">
    <property type="entry name" value="GroEL"/>
    <property type="match status" value="1"/>
</dbReference>
<dbReference type="NCBIfam" id="NF000592">
    <property type="entry name" value="PRK00013.1"/>
    <property type="match status" value="1"/>
</dbReference>
<dbReference type="NCBIfam" id="NF009487">
    <property type="entry name" value="PRK12849.1"/>
    <property type="match status" value="1"/>
</dbReference>
<dbReference type="NCBIfam" id="NF009488">
    <property type="entry name" value="PRK12850.1"/>
    <property type="match status" value="1"/>
</dbReference>
<dbReference type="NCBIfam" id="NF009489">
    <property type="entry name" value="PRK12851.1"/>
    <property type="match status" value="1"/>
</dbReference>
<dbReference type="PANTHER" id="PTHR45633">
    <property type="entry name" value="60 KDA HEAT SHOCK PROTEIN, MITOCHONDRIAL"/>
    <property type="match status" value="1"/>
</dbReference>
<dbReference type="Pfam" id="PF00118">
    <property type="entry name" value="Cpn60_TCP1"/>
    <property type="match status" value="1"/>
</dbReference>
<dbReference type="PRINTS" id="PR00298">
    <property type="entry name" value="CHAPERONIN60"/>
</dbReference>
<dbReference type="SUPFAM" id="SSF52029">
    <property type="entry name" value="GroEL apical domain-like"/>
    <property type="match status" value="1"/>
</dbReference>
<dbReference type="SUPFAM" id="SSF48592">
    <property type="entry name" value="GroEL equatorial domain-like"/>
    <property type="match status" value="1"/>
</dbReference>
<dbReference type="SUPFAM" id="SSF54849">
    <property type="entry name" value="GroEL-intermediate domain like"/>
    <property type="match status" value="1"/>
</dbReference>
<dbReference type="PROSITE" id="PS00296">
    <property type="entry name" value="CHAPERONINS_CPN60"/>
    <property type="match status" value="1"/>
</dbReference>
<reference key="1">
    <citation type="submission" date="2006-08" db="EMBL/GenBank/DDBJ databases">
        <title>Complete sequence of chromosome 3 of Burkholderia cenocepacia HI2424.</title>
        <authorList>
            <person name="Copeland A."/>
            <person name="Lucas S."/>
            <person name="Lapidus A."/>
            <person name="Barry K."/>
            <person name="Detter J.C."/>
            <person name="Glavina del Rio T."/>
            <person name="Hammon N."/>
            <person name="Israni S."/>
            <person name="Pitluck S."/>
            <person name="Chain P."/>
            <person name="Malfatti S."/>
            <person name="Shin M."/>
            <person name="Vergez L."/>
            <person name="Schmutz J."/>
            <person name="Larimer F."/>
            <person name="Land M."/>
            <person name="Hauser L."/>
            <person name="Kyrpides N."/>
            <person name="Kim E."/>
            <person name="LiPuma J.J."/>
            <person name="Gonzalez C.F."/>
            <person name="Konstantinidis K."/>
            <person name="Tiedje J.M."/>
            <person name="Richardson P."/>
        </authorList>
    </citation>
    <scope>NUCLEOTIDE SEQUENCE [LARGE SCALE GENOMIC DNA]</scope>
    <source>
        <strain>HI2424</strain>
    </source>
</reference>
<accession>A0KCS0</accession>
<sequence>MTAKDVKFRDGARQQIVKGVNVLADAVKVTLGPKGRNVVIERGFGAPVITKDGVSVAKEIELKDRFENMGAQIVKQVASKTADVAGDGTTTATVLAQAIVQEGMKHVAAGMNPMDLKRGIDKAVGAVLDELRKLSRPISTHKEIAQVGAISANSDEAIGKIIADAMEKVGKDGVITVEDGKSLENELDVVEGMQFDRGYVSPYFINDPAKQAAYLDDALILLHDKKISSVRDLLPILEAASKAGKPLLIVAEDVEAEALATLVVNSMRGILKVAAVKAPGFGDRRKAMLEDLAILTGATVISEETGKQLDKATLEDLGSAKRVEVRKDDTIIIDGAGDAARIEARVKSIRVQIDEATSDYDREKLQERVAKLAGGVAVIKVGAVTEVEMKEKKDRVDDALHATRAAVEEGIVPGGGVALLRARAALSDIRGANADQDAGIRIVLRALEAPLRVIAANAGDEPSVVISKVLEGKGNFGYNAATGEYGDLVDAGVVDPTKVTRTALQNAASIASLVLTTDATVAQAPKEESAESAPAPELGY</sequence>
<organism>
    <name type="scientific">Burkholderia cenocepacia (strain HI2424)</name>
    <dbReference type="NCBI Taxonomy" id="331272"/>
    <lineage>
        <taxon>Bacteria</taxon>
        <taxon>Pseudomonadati</taxon>
        <taxon>Pseudomonadota</taxon>
        <taxon>Betaproteobacteria</taxon>
        <taxon>Burkholderiales</taxon>
        <taxon>Burkholderiaceae</taxon>
        <taxon>Burkholderia</taxon>
        <taxon>Burkholderia cepacia complex</taxon>
    </lineage>
</organism>
<gene>
    <name evidence="1" type="primary">groEL3</name>
    <name evidence="1" type="synonym">groL3</name>
    <name type="ordered locus">Bcen2424_6251</name>
</gene>
<name>CH603_BURCH</name>
<evidence type="ECO:0000255" key="1">
    <source>
        <dbReference type="HAMAP-Rule" id="MF_00600"/>
    </source>
</evidence>
<protein>
    <recommendedName>
        <fullName evidence="1">Chaperonin GroEL 3</fullName>
        <ecNumber evidence="1">5.6.1.7</ecNumber>
    </recommendedName>
    <alternativeName>
        <fullName evidence="1">60 kDa chaperonin 3</fullName>
    </alternativeName>
    <alternativeName>
        <fullName evidence="1">Chaperonin-60 3</fullName>
        <shortName evidence="1">Cpn60 3</shortName>
    </alternativeName>
</protein>
<feature type="chain" id="PRO_0000331983" description="Chaperonin GroEL 3">
    <location>
        <begin position="1"/>
        <end position="540"/>
    </location>
</feature>
<feature type="binding site" evidence="1">
    <location>
        <begin position="30"/>
        <end position="33"/>
    </location>
    <ligand>
        <name>ATP</name>
        <dbReference type="ChEBI" id="CHEBI:30616"/>
    </ligand>
</feature>
<feature type="binding site" evidence="1">
    <location>
        <position position="51"/>
    </location>
    <ligand>
        <name>ATP</name>
        <dbReference type="ChEBI" id="CHEBI:30616"/>
    </ligand>
</feature>
<feature type="binding site" evidence="1">
    <location>
        <begin position="87"/>
        <end position="91"/>
    </location>
    <ligand>
        <name>ATP</name>
        <dbReference type="ChEBI" id="CHEBI:30616"/>
    </ligand>
</feature>
<feature type="binding site" evidence="1">
    <location>
        <position position="415"/>
    </location>
    <ligand>
        <name>ATP</name>
        <dbReference type="ChEBI" id="CHEBI:30616"/>
    </ligand>
</feature>
<feature type="binding site" evidence="1">
    <location>
        <begin position="479"/>
        <end position="481"/>
    </location>
    <ligand>
        <name>ATP</name>
        <dbReference type="ChEBI" id="CHEBI:30616"/>
    </ligand>
</feature>
<feature type="binding site" evidence="1">
    <location>
        <position position="495"/>
    </location>
    <ligand>
        <name>ATP</name>
        <dbReference type="ChEBI" id="CHEBI:30616"/>
    </ligand>
</feature>
<proteinExistence type="inferred from homology"/>